<proteinExistence type="evidence at protein level"/>
<dbReference type="EMBL" id="AE004091">
    <property type="protein sequence ID" value="AAG07627.1"/>
    <property type="molecule type" value="Genomic_DNA"/>
</dbReference>
<dbReference type="EMBL" id="AF047025">
    <property type="protein sequence ID" value="AAC03115.1"/>
    <property type="molecule type" value="Genomic_DNA"/>
</dbReference>
<dbReference type="PIR" id="E83113">
    <property type="entry name" value="E83113"/>
</dbReference>
<dbReference type="RefSeq" id="NP_252929.1">
    <property type="nucleotide sequence ID" value="NC_002516.2"/>
</dbReference>
<dbReference type="RefSeq" id="WP_003093678.1">
    <property type="nucleotide sequence ID" value="NZ_QZGE01000028.1"/>
</dbReference>
<dbReference type="PDB" id="7UNR">
    <property type="method" value="EM"/>
    <property type="resolution" value="2.90 A"/>
    <property type="chains" value="d=1-206"/>
</dbReference>
<dbReference type="PDB" id="7UNU">
    <property type="method" value="EM"/>
    <property type="resolution" value="2.90 A"/>
    <property type="chains" value="d=1-206"/>
</dbReference>
<dbReference type="PDB" id="7UNV">
    <property type="method" value="EM"/>
    <property type="resolution" value="2.70 A"/>
    <property type="chains" value="d=1-206"/>
</dbReference>
<dbReference type="PDB" id="7UNW">
    <property type="method" value="EM"/>
    <property type="resolution" value="2.60 A"/>
    <property type="chains" value="d=1-206"/>
</dbReference>
<dbReference type="PDB" id="8CD1">
    <property type="method" value="EM"/>
    <property type="resolution" value="3.00 A"/>
    <property type="chains" value="d=1-206"/>
</dbReference>
<dbReference type="PDB" id="8RWG">
    <property type="method" value="EM"/>
    <property type="resolution" value="2.46 A"/>
    <property type="chains" value="c=1-206"/>
</dbReference>
<dbReference type="PDBsum" id="7UNR"/>
<dbReference type="PDBsum" id="7UNU"/>
<dbReference type="PDBsum" id="7UNV"/>
<dbReference type="PDBsum" id="7UNW"/>
<dbReference type="PDBsum" id="8CD1"/>
<dbReference type="PDBsum" id="8RWG"/>
<dbReference type="EMDB" id="EMD-16566"/>
<dbReference type="EMDB" id="EMD-19547"/>
<dbReference type="EMDB" id="EMD-26630"/>
<dbReference type="EMDB" id="EMD-26633"/>
<dbReference type="EMDB" id="EMD-26634"/>
<dbReference type="EMDB" id="EMD-26635"/>
<dbReference type="SMR" id="O52759"/>
<dbReference type="FunCoup" id="O52759">
    <property type="interactions" value="939"/>
</dbReference>
<dbReference type="STRING" id="208964.PA4239"/>
<dbReference type="PaxDb" id="208964-PA4239"/>
<dbReference type="DNASU" id="881814"/>
<dbReference type="GeneID" id="881814"/>
<dbReference type="KEGG" id="pae:PA4239"/>
<dbReference type="PATRIC" id="fig|208964.12.peg.4440"/>
<dbReference type="PseudoCAP" id="PA4239"/>
<dbReference type="HOGENOM" id="CLU_092403_0_2_6"/>
<dbReference type="InParanoid" id="O52759"/>
<dbReference type="OrthoDB" id="9803672at2"/>
<dbReference type="PhylomeDB" id="O52759"/>
<dbReference type="BioCyc" id="PAER208964:G1FZ6-4312-MONOMER"/>
<dbReference type="PRO" id="PR:O52759"/>
<dbReference type="Proteomes" id="UP000002438">
    <property type="component" value="Chromosome"/>
</dbReference>
<dbReference type="GO" id="GO:0015935">
    <property type="term" value="C:small ribosomal subunit"/>
    <property type="evidence" value="ECO:0000318"/>
    <property type="project" value="GO_Central"/>
</dbReference>
<dbReference type="GO" id="GO:0019843">
    <property type="term" value="F:rRNA binding"/>
    <property type="evidence" value="ECO:0000318"/>
    <property type="project" value="GO_Central"/>
</dbReference>
<dbReference type="GO" id="GO:0003735">
    <property type="term" value="F:structural constituent of ribosome"/>
    <property type="evidence" value="ECO:0000318"/>
    <property type="project" value="GO_Central"/>
</dbReference>
<dbReference type="GO" id="GO:0042274">
    <property type="term" value="P:ribosomal small subunit biogenesis"/>
    <property type="evidence" value="ECO:0000318"/>
    <property type="project" value="GO_Central"/>
</dbReference>
<dbReference type="GO" id="GO:0006412">
    <property type="term" value="P:translation"/>
    <property type="evidence" value="ECO:0007669"/>
    <property type="project" value="UniProtKB-UniRule"/>
</dbReference>
<dbReference type="CDD" id="cd00165">
    <property type="entry name" value="S4"/>
    <property type="match status" value="1"/>
</dbReference>
<dbReference type="FunFam" id="1.10.1050.10:FF:000001">
    <property type="entry name" value="30S ribosomal protein S4"/>
    <property type="match status" value="1"/>
</dbReference>
<dbReference type="FunFam" id="3.10.290.10:FF:000001">
    <property type="entry name" value="30S ribosomal protein S4"/>
    <property type="match status" value="1"/>
</dbReference>
<dbReference type="Gene3D" id="1.10.1050.10">
    <property type="entry name" value="Ribosomal Protein S4 Delta 41, Chain A, domain 1"/>
    <property type="match status" value="1"/>
</dbReference>
<dbReference type="Gene3D" id="3.10.290.10">
    <property type="entry name" value="RNA-binding S4 domain"/>
    <property type="match status" value="1"/>
</dbReference>
<dbReference type="HAMAP" id="MF_01306_B">
    <property type="entry name" value="Ribosomal_uS4_B"/>
    <property type="match status" value="1"/>
</dbReference>
<dbReference type="InterPro" id="IPR022801">
    <property type="entry name" value="Ribosomal_uS4"/>
</dbReference>
<dbReference type="InterPro" id="IPR005709">
    <property type="entry name" value="Ribosomal_uS4_bac-type"/>
</dbReference>
<dbReference type="InterPro" id="IPR018079">
    <property type="entry name" value="Ribosomal_uS4_CS"/>
</dbReference>
<dbReference type="InterPro" id="IPR001912">
    <property type="entry name" value="Ribosomal_uS4_N"/>
</dbReference>
<dbReference type="InterPro" id="IPR002942">
    <property type="entry name" value="S4_RNA-bd"/>
</dbReference>
<dbReference type="InterPro" id="IPR036986">
    <property type="entry name" value="S4_RNA-bd_sf"/>
</dbReference>
<dbReference type="NCBIfam" id="NF003717">
    <property type="entry name" value="PRK05327.1"/>
    <property type="match status" value="1"/>
</dbReference>
<dbReference type="NCBIfam" id="TIGR01017">
    <property type="entry name" value="rpsD_bact"/>
    <property type="match status" value="1"/>
</dbReference>
<dbReference type="PANTHER" id="PTHR11831">
    <property type="entry name" value="30S 40S RIBOSOMAL PROTEIN"/>
    <property type="match status" value="1"/>
</dbReference>
<dbReference type="PANTHER" id="PTHR11831:SF4">
    <property type="entry name" value="SMALL RIBOSOMAL SUBUNIT PROTEIN US4M"/>
    <property type="match status" value="1"/>
</dbReference>
<dbReference type="Pfam" id="PF00163">
    <property type="entry name" value="Ribosomal_S4"/>
    <property type="match status" value="1"/>
</dbReference>
<dbReference type="Pfam" id="PF01479">
    <property type="entry name" value="S4"/>
    <property type="match status" value="1"/>
</dbReference>
<dbReference type="SMART" id="SM01390">
    <property type="entry name" value="Ribosomal_S4"/>
    <property type="match status" value="1"/>
</dbReference>
<dbReference type="SMART" id="SM00363">
    <property type="entry name" value="S4"/>
    <property type="match status" value="1"/>
</dbReference>
<dbReference type="SUPFAM" id="SSF55174">
    <property type="entry name" value="Alpha-L RNA-binding motif"/>
    <property type="match status" value="1"/>
</dbReference>
<dbReference type="PROSITE" id="PS00632">
    <property type="entry name" value="RIBOSOMAL_S4"/>
    <property type="match status" value="1"/>
</dbReference>
<dbReference type="PROSITE" id="PS50889">
    <property type="entry name" value="S4"/>
    <property type="match status" value="1"/>
</dbReference>
<accession>O52759</accession>
<keyword id="KW-0002">3D-structure</keyword>
<keyword id="KW-1185">Reference proteome</keyword>
<keyword id="KW-0687">Ribonucleoprotein</keyword>
<keyword id="KW-0689">Ribosomal protein</keyword>
<keyword id="KW-0694">RNA-binding</keyword>
<keyword id="KW-0699">rRNA-binding</keyword>
<organism>
    <name type="scientific">Pseudomonas aeruginosa (strain ATCC 15692 / DSM 22644 / CIP 104116 / JCM 14847 / LMG 12228 / 1C / PRS 101 / PAO1)</name>
    <dbReference type="NCBI Taxonomy" id="208964"/>
    <lineage>
        <taxon>Bacteria</taxon>
        <taxon>Pseudomonadati</taxon>
        <taxon>Pseudomonadota</taxon>
        <taxon>Gammaproteobacteria</taxon>
        <taxon>Pseudomonadales</taxon>
        <taxon>Pseudomonadaceae</taxon>
        <taxon>Pseudomonas</taxon>
    </lineage>
</organism>
<comment type="function">
    <text evidence="1">One of the primary rRNA binding proteins, it binds directly to 16S rRNA where it nucleates assembly of the body of the 30S subunit.</text>
</comment>
<comment type="function">
    <text evidence="1">With S5 and S12 plays an important role in translational accuracy.</text>
</comment>
<comment type="subunit">
    <text evidence="1">Part of the 30S ribosomal subunit. Contacts protein S5. The interaction surface between S4 and S5 is involved in control of translational fidelity.</text>
</comment>
<comment type="similarity">
    <text evidence="1">Belongs to the universal ribosomal protein uS4 family.</text>
</comment>
<feature type="chain" id="PRO_0000132438" description="Small ribosomal subunit protein uS4">
    <location>
        <begin position="1"/>
        <end position="206"/>
    </location>
</feature>
<feature type="domain" description="S4 RNA-binding" evidence="1">
    <location>
        <begin position="96"/>
        <end position="156"/>
    </location>
</feature>
<feature type="sequence conflict" description="In Ref. 2." evidence="2" ref="2">
    <original>SDLSAD</original>
    <variation>NSSSVP</variation>
    <location>
        <begin position="189"/>
        <end position="194"/>
    </location>
</feature>
<protein>
    <recommendedName>
        <fullName evidence="1">Small ribosomal subunit protein uS4</fullName>
    </recommendedName>
    <alternativeName>
        <fullName evidence="2">30S ribosomal protein S4</fullName>
    </alternativeName>
</protein>
<evidence type="ECO:0000255" key="1">
    <source>
        <dbReference type="HAMAP-Rule" id="MF_01306"/>
    </source>
</evidence>
<evidence type="ECO:0000305" key="2"/>
<gene>
    <name evidence="1" type="primary">rpsD</name>
    <name type="ordered locus">PA4239</name>
</gene>
<reference key="1">
    <citation type="journal article" date="2000" name="Nature">
        <title>Complete genome sequence of Pseudomonas aeruginosa PAO1, an opportunistic pathogen.</title>
        <authorList>
            <person name="Stover C.K."/>
            <person name="Pham X.-Q.T."/>
            <person name="Erwin A.L."/>
            <person name="Mizoguchi S.D."/>
            <person name="Warrener P."/>
            <person name="Hickey M.J."/>
            <person name="Brinkman F.S.L."/>
            <person name="Hufnagle W.O."/>
            <person name="Kowalik D.J."/>
            <person name="Lagrou M."/>
            <person name="Garber R.L."/>
            <person name="Goltry L."/>
            <person name="Tolentino E."/>
            <person name="Westbrock-Wadman S."/>
            <person name="Yuan Y."/>
            <person name="Brody L.L."/>
            <person name="Coulter S.N."/>
            <person name="Folger K.R."/>
            <person name="Kas A."/>
            <person name="Larbig K."/>
            <person name="Lim R.M."/>
            <person name="Smith K.A."/>
            <person name="Spencer D.H."/>
            <person name="Wong G.K.-S."/>
            <person name="Wu Z."/>
            <person name="Paulsen I.T."/>
            <person name="Reizer J."/>
            <person name="Saier M.H. Jr."/>
            <person name="Hancock R.E.W."/>
            <person name="Lory S."/>
            <person name="Olson M.V."/>
        </authorList>
    </citation>
    <scope>NUCLEOTIDE SEQUENCE [LARGE SCALE GENOMIC DNA]</scope>
    <source>
        <strain>ATCC 15692 / DSM 22644 / CIP 104116 / JCM 14847 / LMG 12228 / 1C / PRS 101 / PAO1</strain>
    </source>
</reference>
<reference key="2">
    <citation type="journal article" date="1999" name="J. Bacteriol.">
        <title>Bacterioferritin A modulates catalase A (KatA) activity and resistance to hydrogen peroxide in Pseudomonas aeruginosa.</title>
        <authorList>
            <person name="Ma J.-F."/>
            <person name="Ochsner U.A."/>
            <person name="Klotz M.G."/>
            <person name="Nanayakkara V.K."/>
            <person name="Howell M.L."/>
            <person name="Johnson Z."/>
            <person name="Posey J.E."/>
            <person name="Vasil M.L."/>
            <person name="Monaco J.J."/>
            <person name="Hassett D.J."/>
        </authorList>
    </citation>
    <scope>NUCLEOTIDE SEQUENCE [GENOMIC DNA] OF 189-206</scope>
    <source>
        <strain>FRD1</strain>
    </source>
</reference>
<name>RS4_PSEAE</name>
<sequence length="206" mass="23278">MARYIGPKCKLSRREGTDLFLKSGARALDSKCKAENVPGQHGQRRGRLSDYGLQLREKQKVRRIYGVLERQFRGYYQEASRRKGSTGENLLQLLECRLDNVVYRMGFGSTRSESRQLVSHKAITVNGQTVNIPSYQVKAGDVVAVREKSKNQLRIAQALELCGQRGRVEWVEVDLDKKAGTFKSAPARSDLSADINENLIVELYSK</sequence>